<protein>
    <recommendedName>
        <fullName>UPF0496 protein 4</fullName>
    </recommendedName>
</protein>
<proteinExistence type="inferred from homology"/>
<gene>
    <name type="ORF">OsI_033149</name>
</gene>
<organism>
    <name type="scientific">Oryza sativa subsp. indica</name>
    <name type="common">Rice</name>
    <dbReference type="NCBI Taxonomy" id="39946"/>
    <lineage>
        <taxon>Eukaryota</taxon>
        <taxon>Viridiplantae</taxon>
        <taxon>Streptophyta</taxon>
        <taxon>Embryophyta</taxon>
        <taxon>Tracheophyta</taxon>
        <taxon>Spermatophyta</taxon>
        <taxon>Magnoliopsida</taxon>
        <taxon>Liliopsida</taxon>
        <taxon>Poales</taxon>
        <taxon>Poaceae</taxon>
        <taxon>BOP clade</taxon>
        <taxon>Oryzoideae</taxon>
        <taxon>Oryzeae</taxon>
        <taxon>Oryzinae</taxon>
        <taxon>Oryza</taxon>
        <taxon>Oryza sativa</taxon>
    </lineage>
</organism>
<name>U496D_ORYSI</name>
<reference key="1">
    <citation type="journal article" date="2005" name="PLoS Biol.">
        <title>The genomes of Oryza sativa: a history of duplications.</title>
        <authorList>
            <person name="Yu J."/>
            <person name="Wang J."/>
            <person name="Lin W."/>
            <person name="Li S."/>
            <person name="Li H."/>
            <person name="Zhou J."/>
            <person name="Ni P."/>
            <person name="Dong W."/>
            <person name="Hu S."/>
            <person name="Zeng C."/>
            <person name="Zhang J."/>
            <person name="Zhang Y."/>
            <person name="Li R."/>
            <person name="Xu Z."/>
            <person name="Li S."/>
            <person name="Li X."/>
            <person name="Zheng H."/>
            <person name="Cong L."/>
            <person name="Lin L."/>
            <person name="Yin J."/>
            <person name="Geng J."/>
            <person name="Li G."/>
            <person name="Shi J."/>
            <person name="Liu J."/>
            <person name="Lv H."/>
            <person name="Li J."/>
            <person name="Wang J."/>
            <person name="Deng Y."/>
            <person name="Ran L."/>
            <person name="Shi X."/>
            <person name="Wang X."/>
            <person name="Wu Q."/>
            <person name="Li C."/>
            <person name="Ren X."/>
            <person name="Wang J."/>
            <person name="Wang X."/>
            <person name="Li D."/>
            <person name="Liu D."/>
            <person name="Zhang X."/>
            <person name="Ji Z."/>
            <person name="Zhao W."/>
            <person name="Sun Y."/>
            <person name="Zhang Z."/>
            <person name="Bao J."/>
            <person name="Han Y."/>
            <person name="Dong L."/>
            <person name="Ji J."/>
            <person name="Chen P."/>
            <person name="Wu S."/>
            <person name="Liu J."/>
            <person name="Xiao Y."/>
            <person name="Bu D."/>
            <person name="Tan J."/>
            <person name="Yang L."/>
            <person name="Ye C."/>
            <person name="Zhang J."/>
            <person name="Xu J."/>
            <person name="Zhou Y."/>
            <person name="Yu Y."/>
            <person name="Zhang B."/>
            <person name="Zhuang S."/>
            <person name="Wei H."/>
            <person name="Liu B."/>
            <person name="Lei M."/>
            <person name="Yu H."/>
            <person name="Li Y."/>
            <person name="Xu H."/>
            <person name="Wei S."/>
            <person name="He X."/>
            <person name="Fang L."/>
            <person name="Zhang Z."/>
            <person name="Zhang Y."/>
            <person name="Huang X."/>
            <person name="Su Z."/>
            <person name="Tong W."/>
            <person name="Li J."/>
            <person name="Tong Z."/>
            <person name="Li S."/>
            <person name="Ye J."/>
            <person name="Wang L."/>
            <person name="Fang L."/>
            <person name="Lei T."/>
            <person name="Chen C.-S."/>
            <person name="Chen H.-C."/>
            <person name="Xu Z."/>
            <person name="Li H."/>
            <person name="Huang H."/>
            <person name="Zhang F."/>
            <person name="Xu H."/>
            <person name="Li N."/>
            <person name="Zhao C."/>
            <person name="Li S."/>
            <person name="Dong L."/>
            <person name="Huang Y."/>
            <person name="Li L."/>
            <person name="Xi Y."/>
            <person name="Qi Q."/>
            <person name="Li W."/>
            <person name="Zhang B."/>
            <person name="Hu W."/>
            <person name="Zhang Y."/>
            <person name="Tian X."/>
            <person name="Jiao Y."/>
            <person name="Liang X."/>
            <person name="Jin J."/>
            <person name="Gao L."/>
            <person name="Zheng W."/>
            <person name="Hao B."/>
            <person name="Liu S.-M."/>
            <person name="Wang W."/>
            <person name="Yuan L."/>
            <person name="Cao M."/>
            <person name="McDermott J."/>
            <person name="Samudrala R."/>
            <person name="Wang J."/>
            <person name="Wong G.K.-S."/>
            <person name="Yang H."/>
        </authorList>
    </citation>
    <scope>NUCLEOTIDE SEQUENCE [LARGE SCALE GENOMIC DNA]</scope>
    <source>
        <strain>cv. 93-11</strain>
    </source>
</reference>
<evidence type="ECO:0000255" key="1"/>
<evidence type="ECO:0000305" key="2"/>
<feature type="chain" id="PRO_0000306910" description="UPF0496 protein 4">
    <location>
        <begin position="1"/>
        <end position="456"/>
    </location>
</feature>
<feature type="transmembrane region" description="Helical" evidence="1">
    <location>
        <begin position="205"/>
        <end position="221"/>
    </location>
</feature>
<accession>A2Z9A6</accession>
<sequence length="456" mass="49890">MSRAHGSPRSFFPVGNPFRVMFPGGAHLSRKLQELLASYEDALALSLRKLKPEAASDVLTLSWMRLAVDCLSELHTNIANLITDLELPVSDWDDKWVDIYLNSSVKLLDICIALSSELSRLDQGQLLLQYALHVLGSESGVPSQEQLKRAEPSLREWMELVGVRCPRLVSCSATLQELAGNLSLMKVKNSVKGKVLMRALYGIESVTVFVCSIFVAVLSGSPKPLVELHVPEKFGWSQAFNDLHTAVSEELTRQLAGGSVAAVKELEEVEACAKRLHVLASTSQLEEEAANLANAVSHTEEEVMSDSIVQEGDHHCGLKLADDTTRECEVVISESIAEEGTHEAEMKKDISYEKGVAMVERISYEEHQDSNVKQANGSSDESALVVPERTSVQESKEELLNCISSMSKSAEGLRHGLDSLSKRVGDFFQIVLTGRDALLCNLRISDAASKVAEVSS</sequence>
<dbReference type="EMBL" id="CM000135">
    <property type="status" value="NOT_ANNOTATED_CDS"/>
    <property type="molecule type" value="Genomic_DNA"/>
</dbReference>
<dbReference type="STRING" id="39946.A2Z9A6"/>
<dbReference type="EnsemblPlants" id="OsIR64_10g0016960.01">
    <property type="protein sequence ID" value="OsIR64_10g0016960.01"/>
    <property type="gene ID" value="OsIR64_10g0016960"/>
</dbReference>
<dbReference type="EnsemblPlants" id="OsKYG_10g0016590.01">
    <property type="protein sequence ID" value="OsKYG_10g0016590.01"/>
    <property type="gene ID" value="OsKYG_10g0016590"/>
</dbReference>
<dbReference type="EnsemblPlants" id="OsLiXu_10g0016800.01">
    <property type="protein sequence ID" value="OsLiXu_10g0016800.01"/>
    <property type="gene ID" value="OsLiXu_10g0016800"/>
</dbReference>
<dbReference type="EnsemblPlants" id="OsMH63_10G016920_01">
    <property type="protein sequence ID" value="OsMH63_10G016920_01"/>
    <property type="gene ID" value="OsMH63_10G016920"/>
</dbReference>
<dbReference type="EnsemblPlants" id="OsMH63_10G016920_02">
    <property type="protein sequence ID" value="OsMH63_10G016920_02"/>
    <property type="gene ID" value="OsMH63_10G016920"/>
</dbReference>
<dbReference type="EnsemblPlants" id="OsZS97_10G017050_01">
    <property type="protein sequence ID" value="OsZS97_10G017050_01"/>
    <property type="gene ID" value="OsZS97_10G017050"/>
</dbReference>
<dbReference type="Gramene" id="OsIR64_10g0016960.01">
    <property type="protein sequence ID" value="OsIR64_10g0016960.01"/>
    <property type="gene ID" value="OsIR64_10g0016960"/>
</dbReference>
<dbReference type="Gramene" id="OsKYG_10g0016590.01">
    <property type="protein sequence ID" value="OsKYG_10g0016590.01"/>
    <property type="gene ID" value="OsKYG_10g0016590"/>
</dbReference>
<dbReference type="Gramene" id="OsLiXu_10g0016800.01">
    <property type="protein sequence ID" value="OsLiXu_10g0016800.01"/>
    <property type="gene ID" value="OsLiXu_10g0016800"/>
</dbReference>
<dbReference type="Gramene" id="OsMH63_10G016920_01">
    <property type="protein sequence ID" value="OsMH63_10G016920_01"/>
    <property type="gene ID" value="OsMH63_10G016920"/>
</dbReference>
<dbReference type="Gramene" id="OsMH63_10G016920_02">
    <property type="protein sequence ID" value="OsMH63_10G016920_02"/>
    <property type="gene ID" value="OsMH63_10G016920"/>
</dbReference>
<dbReference type="Gramene" id="OsZS97_10G017050_01">
    <property type="protein sequence ID" value="OsZS97_10G017050_01"/>
    <property type="gene ID" value="OsZS97_10G017050"/>
</dbReference>
<dbReference type="Proteomes" id="UP000007015">
    <property type="component" value="Chromosome 10"/>
</dbReference>
<dbReference type="GO" id="GO:0016020">
    <property type="term" value="C:membrane"/>
    <property type="evidence" value="ECO:0007669"/>
    <property type="project" value="UniProtKB-SubCell"/>
</dbReference>
<dbReference type="InterPro" id="IPR008511">
    <property type="entry name" value="ROH1-like"/>
</dbReference>
<dbReference type="PANTHER" id="PTHR31509">
    <property type="entry name" value="BPS1-LIKE PROTEIN"/>
    <property type="match status" value="1"/>
</dbReference>
<dbReference type="Pfam" id="PF05633">
    <property type="entry name" value="ROH1-like"/>
    <property type="match status" value="1"/>
</dbReference>
<comment type="subcellular location">
    <subcellularLocation>
        <location evidence="2">Membrane</location>
        <topology evidence="2">Single-pass membrane protein</topology>
    </subcellularLocation>
</comment>
<comment type="similarity">
    <text evidence="2">Belongs to the ROH1 family.</text>
</comment>
<keyword id="KW-0472">Membrane</keyword>
<keyword id="KW-1185">Reference proteome</keyword>
<keyword id="KW-0812">Transmembrane</keyword>
<keyword id="KW-1133">Transmembrane helix</keyword>